<sequence length="170" mass="18213">MHQVVCATTNPAKIQAILQAFHEIFGEGSCHIASVAVESGVPEQPFGSEETRAGARNRVANARRLLPEADFWVAIEAGIDGDSTFSWVVIENASQRGEARSATLPLPAVILEKVREGEALGPVMSRYTGIDEIGRKEGAIGVFTAGKLTRASVYHQAVILALSPFHNAVY</sequence>
<reference key="1">
    <citation type="journal article" date="2009" name="J. Bacteriol.">
        <title>Genomic sequencing reveals regulatory mutations and recombinational events in the widely used MC4100 lineage of Escherichia coli K-12.</title>
        <authorList>
            <person name="Ferenci T."/>
            <person name="Zhou Z."/>
            <person name="Betteridge T."/>
            <person name="Ren Y."/>
            <person name="Liu Y."/>
            <person name="Feng L."/>
            <person name="Reeves P.R."/>
            <person name="Wang L."/>
        </authorList>
    </citation>
    <scope>NUCLEOTIDE SEQUENCE [LARGE SCALE GENOMIC DNA]</scope>
    <source>
        <strain>K12 / MC4100 / BW2952</strain>
    </source>
</reference>
<name>NCPP_ECOBW</name>
<accession>C4ZT76</accession>
<feature type="chain" id="PRO_1000212389" description="Inosine/xanthosine triphosphatase">
    <location>
        <begin position="1"/>
        <end position="170"/>
    </location>
</feature>
<feature type="binding site" evidence="1">
    <location>
        <begin position="8"/>
        <end position="13"/>
    </location>
    <ligand>
        <name>substrate</name>
    </ligand>
</feature>
<feature type="binding site" evidence="1">
    <location>
        <position position="38"/>
    </location>
    <ligand>
        <name>Mg(2+)</name>
        <dbReference type="ChEBI" id="CHEBI:18420"/>
    </ligand>
</feature>
<feature type="binding site" evidence="1">
    <location>
        <begin position="68"/>
        <end position="69"/>
    </location>
    <ligand>
        <name>substrate</name>
    </ligand>
</feature>
<feature type="binding site" evidence="1">
    <location>
        <position position="68"/>
    </location>
    <ligand>
        <name>Mg(2+)</name>
        <dbReference type="ChEBI" id="CHEBI:18420"/>
    </ligand>
</feature>
<protein>
    <recommendedName>
        <fullName evidence="1">Inosine/xanthosine triphosphatase</fullName>
        <shortName evidence="1">ITPase/XTPase</shortName>
        <ecNumber evidence="1">3.6.1.73</ecNumber>
    </recommendedName>
    <alternativeName>
        <fullName evidence="1">Non-canonical purine NTP phosphatase</fullName>
    </alternativeName>
    <alternativeName>
        <fullName evidence="1">Non-standard purine NTP phosphatase</fullName>
    </alternativeName>
    <alternativeName>
        <fullName evidence="1">Nucleoside-triphosphate phosphatase</fullName>
        <shortName evidence="1">NTPase</shortName>
    </alternativeName>
</protein>
<proteinExistence type="inferred from homology"/>
<keyword id="KW-0378">Hydrolase</keyword>
<keyword id="KW-0460">Magnesium</keyword>
<keyword id="KW-0464">Manganese</keyword>
<keyword id="KW-0479">Metal-binding</keyword>
<keyword id="KW-0546">Nucleotide metabolism</keyword>
<keyword id="KW-0547">Nucleotide-binding</keyword>
<dbReference type="EC" id="3.6.1.73" evidence="1"/>
<dbReference type="EMBL" id="CP001396">
    <property type="protein sequence ID" value="ACR65635.1"/>
    <property type="molecule type" value="Genomic_DNA"/>
</dbReference>
<dbReference type="RefSeq" id="WP_001338221.1">
    <property type="nucleotide sequence ID" value="NC_012759.1"/>
</dbReference>
<dbReference type="SMR" id="C4ZT76"/>
<dbReference type="GeneID" id="75169890"/>
<dbReference type="KEGG" id="ebw:BWG_4086"/>
<dbReference type="HOGENOM" id="CLU_087417_1_0_6"/>
<dbReference type="GO" id="GO:0103023">
    <property type="term" value="F:ITPase activity"/>
    <property type="evidence" value="ECO:0007669"/>
    <property type="project" value="UniProtKB-EC"/>
</dbReference>
<dbReference type="GO" id="GO:0046872">
    <property type="term" value="F:metal ion binding"/>
    <property type="evidence" value="ECO:0007669"/>
    <property type="project" value="UniProtKB-KW"/>
</dbReference>
<dbReference type="GO" id="GO:0000166">
    <property type="term" value="F:nucleotide binding"/>
    <property type="evidence" value="ECO:0007669"/>
    <property type="project" value="UniProtKB-KW"/>
</dbReference>
<dbReference type="GO" id="GO:0017111">
    <property type="term" value="F:ribonucleoside triphosphate phosphatase activity"/>
    <property type="evidence" value="ECO:0000250"/>
    <property type="project" value="UniProtKB"/>
</dbReference>
<dbReference type="GO" id="GO:0009117">
    <property type="term" value="P:nucleotide metabolic process"/>
    <property type="evidence" value="ECO:0007669"/>
    <property type="project" value="UniProtKB-KW"/>
</dbReference>
<dbReference type="GO" id="GO:0006772">
    <property type="term" value="P:thiamine metabolic process"/>
    <property type="evidence" value="ECO:0007669"/>
    <property type="project" value="TreeGrafter"/>
</dbReference>
<dbReference type="FunFam" id="3.90.950.10:FF:000002">
    <property type="entry name" value="Inosine/xanthosine triphosphatase"/>
    <property type="match status" value="1"/>
</dbReference>
<dbReference type="Gene3D" id="3.90.950.10">
    <property type="match status" value="1"/>
</dbReference>
<dbReference type="HAMAP" id="MF_00648">
    <property type="entry name" value="Non_canon_purine_NTPase_YjjX"/>
    <property type="match status" value="1"/>
</dbReference>
<dbReference type="InterPro" id="IPR029001">
    <property type="entry name" value="ITPase-like_fam"/>
</dbReference>
<dbReference type="InterPro" id="IPR002786">
    <property type="entry name" value="Non_canon_purine_NTPase"/>
</dbReference>
<dbReference type="InterPro" id="IPR026533">
    <property type="entry name" value="NTPase/PRRC1"/>
</dbReference>
<dbReference type="InterPro" id="IPR050299">
    <property type="entry name" value="YjjX_NTPase"/>
</dbReference>
<dbReference type="NCBIfam" id="TIGR00258">
    <property type="entry name" value="inosine/xanthosine triphosphatase"/>
    <property type="match status" value="1"/>
</dbReference>
<dbReference type="NCBIfam" id="NF003459">
    <property type="entry name" value="PRK05074.1"/>
    <property type="match status" value="1"/>
</dbReference>
<dbReference type="PANTHER" id="PTHR34699">
    <property type="match status" value="1"/>
</dbReference>
<dbReference type="PANTHER" id="PTHR34699:SF2">
    <property type="entry name" value="NON-CANONICAL PURINE NTP PHOSPHATASE_PRRC1 DOMAIN-CONTAINING PROTEIN"/>
    <property type="match status" value="1"/>
</dbReference>
<dbReference type="Pfam" id="PF01931">
    <property type="entry name" value="NTPase_I-T"/>
    <property type="match status" value="1"/>
</dbReference>
<dbReference type="SUPFAM" id="SSF52972">
    <property type="entry name" value="ITPase-like"/>
    <property type="match status" value="1"/>
</dbReference>
<comment type="function">
    <text evidence="1">Phosphatase that hydrolyzes non-canonical purine nucleotides such as XTP and ITP to their respective diphosphate derivatives. Probably excludes non-canonical purines from DNA/RNA precursor pool, thus preventing their incorporation into DNA/RNA and avoiding chromosomal lesions.</text>
</comment>
<comment type="catalytic activity">
    <reaction evidence="1">
        <text>XTP + H2O = XDP + phosphate + H(+)</text>
        <dbReference type="Rhea" id="RHEA:28406"/>
        <dbReference type="ChEBI" id="CHEBI:15377"/>
        <dbReference type="ChEBI" id="CHEBI:15378"/>
        <dbReference type="ChEBI" id="CHEBI:43474"/>
        <dbReference type="ChEBI" id="CHEBI:59884"/>
        <dbReference type="ChEBI" id="CHEBI:61314"/>
        <dbReference type="EC" id="3.6.1.73"/>
    </reaction>
</comment>
<comment type="catalytic activity">
    <reaction evidence="1">
        <text>ITP + H2O = IDP + phosphate + H(+)</text>
        <dbReference type="Rhea" id="RHEA:28330"/>
        <dbReference type="ChEBI" id="CHEBI:15377"/>
        <dbReference type="ChEBI" id="CHEBI:15378"/>
        <dbReference type="ChEBI" id="CHEBI:43474"/>
        <dbReference type="ChEBI" id="CHEBI:58280"/>
        <dbReference type="ChEBI" id="CHEBI:61402"/>
        <dbReference type="EC" id="3.6.1.73"/>
    </reaction>
</comment>
<comment type="cofactor">
    <cofactor evidence="1">
        <name>Mg(2+)</name>
        <dbReference type="ChEBI" id="CHEBI:18420"/>
    </cofactor>
    <cofactor evidence="1">
        <name>Mn(2+)</name>
        <dbReference type="ChEBI" id="CHEBI:29035"/>
    </cofactor>
    <text evidence="1">Binds 1 divalent metal cation per subunit; can use either Mg(2+) or Mn(2+).</text>
</comment>
<comment type="subunit">
    <text evidence="1">Homodimer.</text>
</comment>
<comment type="similarity">
    <text evidence="1">Belongs to the YjjX NTPase family.</text>
</comment>
<evidence type="ECO:0000255" key="1">
    <source>
        <dbReference type="HAMAP-Rule" id="MF_00648"/>
    </source>
</evidence>
<organism>
    <name type="scientific">Escherichia coli (strain K12 / MC4100 / BW2952)</name>
    <dbReference type="NCBI Taxonomy" id="595496"/>
    <lineage>
        <taxon>Bacteria</taxon>
        <taxon>Pseudomonadati</taxon>
        <taxon>Pseudomonadota</taxon>
        <taxon>Gammaproteobacteria</taxon>
        <taxon>Enterobacterales</taxon>
        <taxon>Enterobacteriaceae</taxon>
        <taxon>Escherichia</taxon>
    </lineage>
</organism>
<gene>
    <name type="primary">yjjX</name>
    <name type="ordered locus">BWG_4086</name>
</gene>